<sequence>MNTPKSIPSGTCRDTPVLKERGQREVFCGLTGIIWLHRKMQDAFFLVIGSRTCAHLLQSAAGVMIFAEPRFGTAILEETDLAGMADAHEELDREVERLLSRRPDIKQLFLVGSCPSEVIKLDLARAAERLTQVHAPHVRVLNYSGSGIETTFTQGEDACLTSMVPVLPTTDQKELMLVGALPDVVEDQAVSLLSQMGIGPIRVLPAPRTAETPGVGPNTVFACLQPFLGDTAAALTRRGAHHIQAPFPFGEEGTTLWLRAIADEFGVDDDTFDRVTAAPRARARKAIANASEHLNGKSVFFMPDSQLEIPLARFLTRECGMEAIEIGQPFIHKGLVGPDLDLMPAGPTISEGQDVDKQLDRVRAAQPDLTVCGLGLANPLEAEGLTTKWAIELVFTPVHFYEQAGDLAGLFSRPVRRRAVLKLEAAE</sequence>
<gene>
    <name evidence="1" type="primary">bchN</name>
    <name type="ordered locus">Jann_0161</name>
</gene>
<organism>
    <name type="scientific">Jannaschia sp. (strain CCS1)</name>
    <dbReference type="NCBI Taxonomy" id="290400"/>
    <lineage>
        <taxon>Bacteria</taxon>
        <taxon>Pseudomonadati</taxon>
        <taxon>Pseudomonadota</taxon>
        <taxon>Alphaproteobacteria</taxon>
        <taxon>Rhodobacterales</taxon>
        <taxon>Roseobacteraceae</taxon>
        <taxon>Jannaschia</taxon>
    </lineage>
</organism>
<dbReference type="EC" id="1.3.7.7" evidence="1"/>
<dbReference type="EMBL" id="CP000264">
    <property type="protein sequence ID" value="ABD53078.1"/>
    <property type="molecule type" value="Genomic_DNA"/>
</dbReference>
<dbReference type="RefSeq" id="WP_011453287.1">
    <property type="nucleotide sequence ID" value="NC_007802.1"/>
</dbReference>
<dbReference type="SMR" id="Q28W34"/>
<dbReference type="STRING" id="290400.Jann_0161"/>
<dbReference type="KEGG" id="jan:Jann_0161"/>
<dbReference type="eggNOG" id="COG2710">
    <property type="taxonomic scope" value="Bacteria"/>
</dbReference>
<dbReference type="HOGENOM" id="CLU_037170_0_0_5"/>
<dbReference type="OrthoDB" id="5714774at2"/>
<dbReference type="UniPathway" id="UPA00671"/>
<dbReference type="Proteomes" id="UP000008326">
    <property type="component" value="Chromosome"/>
</dbReference>
<dbReference type="GO" id="GO:0051539">
    <property type="term" value="F:4 iron, 4 sulfur cluster binding"/>
    <property type="evidence" value="ECO:0007669"/>
    <property type="project" value="UniProtKB-UniRule"/>
</dbReference>
<dbReference type="GO" id="GO:0005524">
    <property type="term" value="F:ATP binding"/>
    <property type="evidence" value="ECO:0007669"/>
    <property type="project" value="UniProtKB-UniRule"/>
</dbReference>
<dbReference type="GO" id="GO:0046872">
    <property type="term" value="F:metal ion binding"/>
    <property type="evidence" value="ECO:0007669"/>
    <property type="project" value="UniProtKB-KW"/>
</dbReference>
<dbReference type="GO" id="GO:0016730">
    <property type="term" value="F:oxidoreductase activity, acting on iron-sulfur proteins as donors"/>
    <property type="evidence" value="ECO:0007669"/>
    <property type="project" value="InterPro"/>
</dbReference>
<dbReference type="GO" id="GO:0016636">
    <property type="term" value="F:oxidoreductase activity, acting on the CH-CH group of donors, iron-sulfur protein as acceptor"/>
    <property type="evidence" value="ECO:0007669"/>
    <property type="project" value="UniProtKB-UniRule"/>
</dbReference>
<dbReference type="GO" id="GO:0036070">
    <property type="term" value="P:light-independent bacteriochlorophyll biosynthetic process"/>
    <property type="evidence" value="ECO:0007669"/>
    <property type="project" value="UniProtKB-UniRule"/>
</dbReference>
<dbReference type="GO" id="GO:0019685">
    <property type="term" value="P:photosynthesis, dark reaction"/>
    <property type="evidence" value="ECO:0007669"/>
    <property type="project" value="InterPro"/>
</dbReference>
<dbReference type="Gene3D" id="3.40.50.1980">
    <property type="entry name" value="Nitrogenase molybdenum iron protein domain"/>
    <property type="match status" value="3"/>
</dbReference>
<dbReference type="HAMAP" id="MF_00352">
    <property type="entry name" value="ChlN_BchN"/>
    <property type="match status" value="1"/>
</dbReference>
<dbReference type="InterPro" id="IPR050293">
    <property type="entry name" value="LIPOR_BchN/ChlN"/>
</dbReference>
<dbReference type="InterPro" id="IPR000510">
    <property type="entry name" value="Nase/OxRdtase_comp1"/>
</dbReference>
<dbReference type="InterPro" id="IPR005970">
    <property type="entry name" value="Protochl_reductN"/>
</dbReference>
<dbReference type="NCBIfam" id="TIGR01279">
    <property type="entry name" value="DPOR_bchN"/>
    <property type="match status" value="1"/>
</dbReference>
<dbReference type="NCBIfam" id="NF002768">
    <property type="entry name" value="PRK02842.1"/>
    <property type="match status" value="1"/>
</dbReference>
<dbReference type="PANTHER" id="PTHR39429">
    <property type="entry name" value="LIGHT-INDEPENDENT PROTOCHLOROPHYLLIDE REDUCTASE SUBUNIT N"/>
    <property type="match status" value="1"/>
</dbReference>
<dbReference type="PANTHER" id="PTHR39429:SF3">
    <property type="entry name" value="LIGHT-INDEPENDENT PROTOCHLOROPHYLLIDE REDUCTASE SUBUNIT N"/>
    <property type="match status" value="1"/>
</dbReference>
<dbReference type="Pfam" id="PF00148">
    <property type="entry name" value="Oxidored_nitro"/>
    <property type="match status" value="1"/>
</dbReference>
<dbReference type="PIRSF" id="PIRSF000162">
    <property type="entry name" value="P_chlorophyll_rd"/>
    <property type="match status" value="1"/>
</dbReference>
<dbReference type="SUPFAM" id="SSF53807">
    <property type="entry name" value="Helical backbone' metal receptor"/>
    <property type="match status" value="1"/>
</dbReference>
<comment type="function">
    <text evidence="1">Component of the dark-operative protochlorophyllide reductase (DPOR) that uses Mg-ATP and reduced ferredoxin to reduce ring D of protochlorophyllide (Pchlide) to form chlorophyllide a (Chlide). This reaction is light-independent. The NB-protein (BchN-BchB) is the catalytic component of the complex.</text>
</comment>
<comment type="catalytic activity">
    <reaction evidence="1">
        <text>chlorophyllide a + oxidized 2[4Fe-4S]-[ferredoxin] + 2 ADP + 2 phosphate = protochlorophyllide a + reduced 2[4Fe-4S]-[ferredoxin] + 2 ATP + 2 H2O</text>
        <dbReference type="Rhea" id="RHEA:28202"/>
        <dbReference type="Rhea" id="RHEA-COMP:10002"/>
        <dbReference type="Rhea" id="RHEA-COMP:10004"/>
        <dbReference type="ChEBI" id="CHEBI:15377"/>
        <dbReference type="ChEBI" id="CHEBI:30616"/>
        <dbReference type="ChEBI" id="CHEBI:33722"/>
        <dbReference type="ChEBI" id="CHEBI:33723"/>
        <dbReference type="ChEBI" id="CHEBI:43474"/>
        <dbReference type="ChEBI" id="CHEBI:83348"/>
        <dbReference type="ChEBI" id="CHEBI:83350"/>
        <dbReference type="ChEBI" id="CHEBI:456216"/>
        <dbReference type="EC" id="1.3.7.7"/>
    </reaction>
</comment>
<comment type="cofactor">
    <cofactor evidence="1">
        <name>[4Fe-4S] cluster</name>
        <dbReference type="ChEBI" id="CHEBI:49883"/>
    </cofactor>
    <text evidence="1">Binds 1 [4Fe-4S] cluster per heterodimer. The cluster is bound at the heterodimer interface by residues from both subunits.</text>
</comment>
<comment type="pathway">
    <text evidence="1">Porphyrin-containing compound metabolism; bacteriochlorophyll biosynthesis (light-independent).</text>
</comment>
<comment type="subunit">
    <text evidence="1">Protochlorophyllide reductase is composed of three subunits; BchL, BchN and BchB. Forms a heterotetramer of two BchB and two BchN subunits.</text>
</comment>
<comment type="similarity">
    <text evidence="1">Belongs to the BchN/ChlN family.</text>
</comment>
<proteinExistence type="inferred from homology"/>
<evidence type="ECO:0000255" key="1">
    <source>
        <dbReference type="HAMAP-Rule" id="MF_00352"/>
    </source>
</evidence>
<keyword id="KW-0004">4Fe-4S</keyword>
<keyword id="KW-0067">ATP-binding</keyword>
<keyword id="KW-0077">Bacteriochlorophyll biosynthesis</keyword>
<keyword id="KW-0149">Chlorophyll biosynthesis</keyword>
<keyword id="KW-0408">Iron</keyword>
<keyword id="KW-0411">Iron-sulfur</keyword>
<keyword id="KW-0479">Metal-binding</keyword>
<keyword id="KW-0547">Nucleotide-binding</keyword>
<keyword id="KW-0560">Oxidoreductase</keyword>
<keyword id="KW-0602">Photosynthesis</keyword>
<keyword id="KW-1185">Reference proteome</keyword>
<name>BCHN_JANSC</name>
<accession>Q28W34</accession>
<feature type="chain" id="PRO_0000324006" description="Light-independent protochlorophyllide reductase subunit N">
    <location>
        <begin position="1"/>
        <end position="427"/>
    </location>
</feature>
<feature type="binding site" evidence="1">
    <location>
        <position position="28"/>
    </location>
    <ligand>
        <name>[4Fe-4S] cluster</name>
        <dbReference type="ChEBI" id="CHEBI:49883"/>
        <note>ligand shared with heterodimeric partner</note>
    </ligand>
</feature>
<feature type="binding site" evidence="1">
    <location>
        <position position="53"/>
    </location>
    <ligand>
        <name>[4Fe-4S] cluster</name>
        <dbReference type="ChEBI" id="CHEBI:49883"/>
        <note>ligand shared with heterodimeric partner</note>
    </ligand>
</feature>
<feature type="binding site" evidence="1">
    <location>
        <position position="114"/>
    </location>
    <ligand>
        <name>[4Fe-4S] cluster</name>
        <dbReference type="ChEBI" id="CHEBI:49883"/>
        <note>ligand shared with heterodimeric partner</note>
    </ligand>
</feature>
<protein>
    <recommendedName>
        <fullName evidence="1">Light-independent protochlorophyllide reductase subunit N</fullName>
        <shortName evidence="1">DPOR subunit N</shortName>
        <shortName evidence="1">LI-POR subunit N</shortName>
        <ecNumber evidence="1">1.3.7.7</ecNumber>
    </recommendedName>
</protein>
<reference key="1">
    <citation type="submission" date="2006-02" db="EMBL/GenBank/DDBJ databases">
        <title>Complete sequence of chromosome of Jannaschia sp. CCS1.</title>
        <authorList>
            <consortium name="US DOE Joint Genome Institute"/>
            <person name="Copeland A."/>
            <person name="Lucas S."/>
            <person name="Lapidus A."/>
            <person name="Barry K."/>
            <person name="Detter J.C."/>
            <person name="Glavina del Rio T."/>
            <person name="Hammon N."/>
            <person name="Israni S."/>
            <person name="Pitluck S."/>
            <person name="Brettin T."/>
            <person name="Bruce D."/>
            <person name="Han C."/>
            <person name="Tapia R."/>
            <person name="Gilna P."/>
            <person name="Chertkov O."/>
            <person name="Saunders E."/>
            <person name="Schmutz J."/>
            <person name="Larimer F."/>
            <person name="Land M."/>
            <person name="Kyrpides N."/>
            <person name="Lykidis A."/>
            <person name="Moran M.A."/>
            <person name="Belas R."/>
            <person name="Ye W."/>
            <person name="Buchan A."/>
            <person name="Gonzalez J.M."/>
            <person name="Schell M.A."/>
            <person name="Richardson P."/>
        </authorList>
    </citation>
    <scope>NUCLEOTIDE SEQUENCE [LARGE SCALE GENOMIC DNA]</scope>
    <source>
        <strain>CCS1</strain>
    </source>
</reference>